<comment type="function">
    <text evidence="1">Cell wall formation. Catalyzes the transfer of a GlcNAc subunit on undecaprenyl-pyrophosphoryl-MurNAc-pentapeptide (lipid intermediate I) to form undecaprenyl-pyrophosphoryl-MurNAc-(pentapeptide)GlcNAc (lipid intermediate II).</text>
</comment>
<comment type="catalytic activity">
    <reaction evidence="1">
        <text>di-trans,octa-cis-undecaprenyl diphospho-N-acetyl-alpha-D-muramoyl-L-alanyl-D-glutamyl-meso-2,6-diaminopimeloyl-D-alanyl-D-alanine + UDP-N-acetyl-alpha-D-glucosamine = di-trans,octa-cis-undecaprenyl diphospho-[N-acetyl-alpha-D-glucosaminyl-(1-&gt;4)]-N-acetyl-alpha-D-muramoyl-L-alanyl-D-glutamyl-meso-2,6-diaminopimeloyl-D-alanyl-D-alanine + UDP + H(+)</text>
        <dbReference type="Rhea" id="RHEA:31227"/>
        <dbReference type="ChEBI" id="CHEBI:15378"/>
        <dbReference type="ChEBI" id="CHEBI:57705"/>
        <dbReference type="ChEBI" id="CHEBI:58223"/>
        <dbReference type="ChEBI" id="CHEBI:61387"/>
        <dbReference type="ChEBI" id="CHEBI:61388"/>
        <dbReference type="EC" id="2.4.1.227"/>
    </reaction>
</comment>
<comment type="pathway">
    <text evidence="1">Cell wall biogenesis; peptidoglycan biosynthesis.</text>
</comment>
<comment type="subcellular location">
    <subcellularLocation>
        <location evidence="1">Cell membrane</location>
        <topology evidence="1">Peripheral membrane protein</topology>
        <orientation evidence="1">Cytoplasmic side</orientation>
    </subcellularLocation>
</comment>
<comment type="similarity">
    <text evidence="1">Belongs to the glycosyltransferase 28 family. MurG subfamily.</text>
</comment>
<protein>
    <recommendedName>
        <fullName evidence="1">UDP-N-acetylglucosamine--N-acetylmuramyl-(pentapeptide) pyrophosphoryl-undecaprenol N-acetylglucosamine transferase 3</fullName>
        <ecNumber evidence="1">2.4.1.227</ecNumber>
    </recommendedName>
    <alternativeName>
        <fullName evidence="1">Undecaprenyl-PP-MurNAc-pentapeptide-UDPGlcNAc GlcNAc transferase 3</fullName>
    </alternativeName>
</protein>
<accession>A0RIN0</accession>
<feature type="chain" id="PRO_0000315068" description="UDP-N-acetylglucosamine--N-acetylmuramyl-(pentapeptide) pyrophosphoryl-undecaprenol N-acetylglucosamine transferase 3">
    <location>
        <begin position="1"/>
        <end position="352"/>
    </location>
</feature>
<feature type="binding site" evidence="1">
    <location>
        <begin position="11"/>
        <end position="13"/>
    </location>
    <ligand>
        <name>UDP-N-acetyl-alpha-D-glucosamine</name>
        <dbReference type="ChEBI" id="CHEBI:57705"/>
    </ligand>
</feature>
<feature type="binding site" evidence="1">
    <location>
        <position position="164"/>
    </location>
    <ligand>
        <name>UDP-N-acetyl-alpha-D-glucosamine</name>
        <dbReference type="ChEBI" id="CHEBI:57705"/>
    </ligand>
</feature>
<feature type="binding site" evidence="1">
    <location>
        <position position="194"/>
    </location>
    <ligand>
        <name>UDP-N-acetyl-alpha-D-glucosamine</name>
        <dbReference type="ChEBI" id="CHEBI:57705"/>
    </ligand>
</feature>
<feature type="binding site" evidence="1">
    <location>
        <position position="289"/>
    </location>
    <ligand>
        <name>UDP-N-acetyl-alpha-D-glucosamine</name>
        <dbReference type="ChEBI" id="CHEBI:57705"/>
    </ligand>
</feature>
<dbReference type="EC" id="2.4.1.227" evidence="1"/>
<dbReference type="EMBL" id="CP000485">
    <property type="protein sequence ID" value="ABK87073.1"/>
    <property type="molecule type" value="Genomic_DNA"/>
</dbReference>
<dbReference type="SMR" id="A0RIN0"/>
<dbReference type="CAZy" id="GT28">
    <property type="family name" value="Glycosyltransferase Family 28"/>
</dbReference>
<dbReference type="KEGG" id="btl:BALH_3849"/>
<dbReference type="HOGENOM" id="CLU_037404_0_0_9"/>
<dbReference type="UniPathway" id="UPA00219"/>
<dbReference type="GO" id="GO:0005886">
    <property type="term" value="C:plasma membrane"/>
    <property type="evidence" value="ECO:0007669"/>
    <property type="project" value="UniProtKB-SubCell"/>
</dbReference>
<dbReference type="GO" id="GO:0051991">
    <property type="term" value="F:UDP-N-acetyl-D-glucosamine:N-acetylmuramoyl-L-alanyl-D-glutamyl-meso-2,6-diaminopimelyl-D-alanyl-D-alanine-diphosphoundecaprenol 4-beta-N-acetylglucosaminlytransferase activity"/>
    <property type="evidence" value="ECO:0007669"/>
    <property type="project" value="RHEA"/>
</dbReference>
<dbReference type="GO" id="GO:0050511">
    <property type="term" value="F:undecaprenyldiphospho-muramoylpentapeptide beta-N-acetylglucosaminyltransferase activity"/>
    <property type="evidence" value="ECO:0007669"/>
    <property type="project" value="UniProtKB-UniRule"/>
</dbReference>
<dbReference type="GO" id="GO:0005975">
    <property type="term" value="P:carbohydrate metabolic process"/>
    <property type="evidence" value="ECO:0007669"/>
    <property type="project" value="InterPro"/>
</dbReference>
<dbReference type="GO" id="GO:0051301">
    <property type="term" value="P:cell division"/>
    <property type="evidence" value="ECO:0007669"/>
    <property type="project" value="UniProtKB-KW"/>
</dbReference>
<dbReference type="GO" id="GO:0071555">
    <property type="term" value="P:cell wall organization"/>
    <property type="evidence" value="ECO:0007669"/>
    <property type="project" value="UniProtKB-KW"/>
</dbReference>
<dbReference type="GO" id="GO:0030259">
    <property type="term" value="P:lipid glycosylation"/>
    <property type="evidence" value="ECO:0007669"/>
    <property type="project" value="UniProtKB-UniRule"/>
</dbReference>
<dbReference type="GO" id="GO:0009252">
    <property type="term" value="P:peptidoglycan biosynthetic process"/>
    <property type="evidence" value="ECO:0007669"/>
    <property type="project" value="UniProtKB-UniRule"/>
</dbReference>
<dbReference type="GO" id="GO:0008360">
    <property type="term" value="P:regulation of cell shape"/>
    <property type="evidence" value="ECO:0007669"/>
    <property type="project" value="UniProtKB-KW"/>
</dbReference>
<dbReference type="CDD" id="cd03785">
    <property type="entry name" value="GT28_MurG"/>
    <property type="match status" value="1"/>
</dbReference>
<dbReference type="Gene3D" id="3.40.50.2000">
    <property type="entry name" value="Glycogen Phosphorylase B"/>
    <property type="match status" value="2"/>
</dbReference>
<dbReference type="HAMAP" id="MF_00033">
    <property type="entry name" value="MurG"/>
    <property type="match status" value="1"/>
</dbReference>
<dbReference type="InterPro" id="IPR006009">
    <property type="entry name" value="GlcNAc_MurG"/>
</dbReference>
<dbReference type="InterPro" id="IPR007235">
    <property type="entry name" value="Glyco_trans_28_C"/>
</dbReference>
<dbReference type="InterPro" id="IPR004276">
    <property type="entry name" value="GlycoTrans_28_N"/>
</dbReference>
<dbReference type="NCBIfam" id="TIGR01133">
    <property type="entry name" value="murG"/>
    <property type="match status" value="1"/>
</dbReference>
<dbReference type="NCBIfam" id="NF009102">
    <property type="entry name" value="PRK12446.1"/>
    <property type="match status" value="1"/>
</dbReference>
<dbReference type="PANTHER" id="PTHR21015:SF27">
    <property type="entry name" value="UDP-N-ACETYLGLUCOSAMINE--N-ACETYLMURAMYL-(PENTAPEPTIDE) PYROPHOSPHORYL-UNDECAPRENOL N-ACETYLGLUCOSAMINE TRANSFERASE"/>
    <property type="match status" value="1"/>
</dbReference>
<dbReference type="PANTHER" id="PTHR21015">
    <property type="entry name" value="UDP-N-ACETYLGLUCOSAMINE--N-ACETYLMURAMYL-(PENTAPEPTIDE) PYROPHOSPHORYL-UNDECAPRENOL N-ACETYLGLUCOSAMINE TRANSFERASE 1"/>
    <property type="match status" value="1"/>
</dbReference>
<dbReference type="Pfam" id="PF04101">
    <property type="entry name" value="Glyco_tran_28_C"/>
    <property type="match status" value="1"/>
</dbReference>
<dbReference type="Pfam" id="PF03033">
    <property type="entry name" value="Glyco_transf_28"/>
    <property type="match status" value="1"/>
</dbReference>
<dbReference type="SUPFAM" id="SSF53756">
    <property type="entry name" value="UDP-Glycosyltransferase/glycogen phosphorylase"/>
    <property type="match status" value="1"/>
</dbReference>
<gene>
    <name evidence="1" type="primary">murG3</name>
    <name type="ordered locus">BALH_3849</name>
</gene>
<evidence type="ECO:0000255" key="1">
    <source>
        <dbReference type="HAMAP-Rule" id="MF_00033"/>
    </source>
</evidence>
<organism>
    <name type="scientific">Bacillus thuringiensis (strain Al Hakam)</name>
    <dbReference type="NCBI Taxonomy" id="412694"/>
    <lineage>
        <taxon>Bacteria</taxon>
        <taxon>Bacillati</taxon>
        <taxon>Bacillota</taxon>
        <taxon>Bacilli</taxon>
        <taxon>Bacillales</taxon>
        <taxon>Bacillaceae</taxon>
        <taxon>Bacillus</taxon>
        <taxon>Bacillus cereus group</taxon>
    </lineage>
</organism>
<name>MURG3_BACAH</name>
<reference key="1">
    <citation type="journal article" date="2007" name="J. Bacteriol.">
        <title>The complete genome sequence of Bacillus thuringiensis Al Hakam.</title>
        <authorList>
            <person name="Challacombe J.F."/>
            <person name="Altherr M.R."/>
            <person name="Xie G."/>
            <person name="Bhotika S.S."/>
            <person name="Brown N."/>
            <person name="Bruce D."/>
            <person name="Campbell C.S."/>
            <person name="Campbell M.L."/>
            <person name="Chen J."/>
            <person name="Chertkov O."/>
            <person name="Cleland C."/>
            <person name="Dimitrijevic M."/>
            <person name="Doggett N.A."/>
            <person name="Fawcett J.J."/>
            <person name="Glavina T."/>
            <person name="Goodwin L.A."/>
            <person name="Green L.D."/>
            <person name="Han C.S."/>
            <person name="Hill K.K."/>
            <person name="Hitchcock P."/>
            <person name="Jackson P.J."/>
            <person name="Keim P."/>
            <person name="Kewalramani A.R."/>
            <person name="Longmire J."/>
            <person name="Lucas S."/>
            <person name="Malfatti S."/>
            <person name="Martinez D."/>
            <person name="McMurry K."/>
            <person name="Meincke L.J."/>
            <person name="Misra M."/>
            <person name="Moseman B.L."/>
            <person name="Mundt M."/>
            <person name="Munk A.C."/>
            <person name="Okinaka R.T."/>
            <person name="Parson-Quintana B."/>
            <person name="Reilly L.P."/>
            <person name="Richardson P."/>
            <person name="Robinson D.L."/>
            <person name="Saunders E."/>
            <person name="Tapia R."/>
            <person name="Tesmer J.G."/>
            <person name="Thayer N."/>
            <person name="Thompson L.S."/>
            <person name="Tice H."/>
            <person name="Ticknor L.O."/>
            <person name="Wills P.L."/>
            <person name="Gilna P."/>
            <person name="Brettin T.S."/>
        </authorList>
    </citation>
    <scope>NUCLEOTIDE SEQUENCE [LARGE SCALE GENOMIC DNA]</scope>
    <source>
        <strain>Al Hakam</strain>
    </source>
</reference>
<proteinExistence type="inferred from homology"/>
<sequence length="352" mass="39493">MKKIVFTGGGSAGHVTPNLAIIPYLKEDNWDISYIGSHQGIEKTIIEKEDIPYYSIASGKLRRYFDLKNIKDPFLVMKGVMDAYVRIRKLKPDVIFSKGGFVSVPVVIGGWLNRVPVLLHESDMTPGLANKIALRFASKIFVTFEEAAKHLPKEKVIYTGSPVREEVLKGNREKALAFLGFSRKKPVITIMGGSLGAKKINETVREALPELLRKYQIVHLCGKGNLDDSLQNKEGYRQFEYVHGELPDILAITDFVISRAGSNAIFEFLTLQKPMLLIPLSKFASRGDQILNAESFERQGYASVLYEEDVTVNSLIKHVEELSHNNEAYNTALKKYNGKEAIQTIIHHISEA</sequence>
<keyword id="KW-0131">Cell cycle</keyword>
<keyword id="KW-0132">Cell division</keyword>
<keyword id="KW-1003">Cell membrane</keyword>
<keyword id="KW-0133">Cell shape</keyword>
<keyword id="KW-0961">Cell wall biogenesis/degradation</keyword>
<keyword id="KW-0328">Glycosyltransferase</keyword>
<keyword id="KW-0472">Membrane</keyword>
<keyword id="KW-0573">Peptidoglycan synthesis</keyword>
<keyword id="KW-0808">Transferase</keyword>